<sequence>MTEKRVEQLESRVNDLECQLAFQEQTIEELNEALSQQQMLITRMQDQMKFVVGKVKNMDGSNLADASEETPPPHY</sequence>
<gene>
    <name evidence="1" type="primary">slyX</name>
    <name type="ordered locus">VS_2844</name>
</gene>
<organism>
    <name type="scientific">Vibrio atlanticus (strain LGP32)</name>
    <name type="common">Vibrio splendidus (strain Mel32)</name>
    <dbReference type="NCBI Taxonomy" id="575788"/>
    <lineage>
        <taxon>Bacteria</taxon>
        <taxon>Pseudomonadati</taxon>
        <taxon>Pseudomonadota</taxon>
        <taxon>Gammaproteobacteria</taxon>
        <taxon>Vibrionales</taxon>
        <taxon>Vibrionaceae</taxon>
        <taxon>Vibrio</taxon>
    </lineage>
</organism>
<protein>
    <recommendedName>
        <fullName evidence="1">Protein SlyX homolog</fullName>
    </recommendedName>
</protein>
<accession>B7VLG9</accession>
<dbReference type="EMBL" id="FM954972">
    <property type="protein sequence ID" value="CAV20137.1"/>
    <property type="molecule type" value="Genomic_DNA"/>
</dbReference>
<dbReference type="SMR" id="B7VLG9"/>
<dbReference type="STRING" id="575788.VS_2844"/>
<dbReference type="KEGG" id="vsp:VS_2844"/>
<dbReference type="eggNOG" id="COG2900">
    <property type="taxonomic scope" value="Bacteria"/>
</dbReference>
<dbReference type="HOGENOM" id="CLU_180796_4_0_6"/>
<dbReference type="Proteomes" id="UP000009100">
    <property type="component" value="Chromosome 1"/>
</dbReference>
<dbReference type="Gene3D" id="1.20.5.300">
    <property type="match status" value="1"/>
</dbReference>
<dbReference type="HAMAP" id="MF_00715">
    <property type="entry name" value="SlyX"/>
    <property type="match status" value="1"/>
</dbReference>
<dbReference type="InterPro" id="IPR007236">
    <property type="entry name" value="SlyX"/>
</dbReference>
<dbReference type="NCBIfam" id="NF003357">
    <property type="entry name" value="PRK04406.1"/>
    <property type="match status" value="1"/>
</dbReference>
<dbReference type="PANTHER" id="PTHR36508">
    <property type="entry name" value="PROTEIN SLYX"/>
    <property type="match status" value="1"/>
</dbReference>
<dbReference type="PANTHER" id="PTHR36508:SF1">
    <property type="entry name" value="PROTEIN SLYX"/>
    <property type="match status" value="1"/>
</dbReference>
<dbReference type="Pfam" id="PF04102">
    <property type="entry name" value="SlyX"/>
    <property type="match status" value="1"/>
</dbReference>
<evidence type="ECO:0000255" key="1">
    <source>
        <dbReference type="HAMAP-Rule" id="MF_00715"/>
    </source>
</evidence>
<name>SLYX_VIBA3</name>
<reference key="1">
    <citation type="submission" date="2009-02" db="EMBL/GenBank/DDBJ databases">
        <title>Vibrio splendidus str. LGP32 complete genome.</title>
        <authorList>
            <person name="Mazel D."/>
            <person name="Le Roux F."/>
        </authorList>
    </citation>
    <scope>NUCLEOTIDE SEQUENCE [LARGE SCALE GENOMIC DNA]</scope>
    <source>
        <strain>LGP32</strain>
    </source>
</reference>
<feature type="chain" id="PRO_1000148011" description="Protein SlyX homolog">
    <location>
        <begin position="1"/>
        <end position="75"/>
    </location>
</feature>
<comment type="similarity">
    <text evidence="1">Belongs to the SlyX family.</text>
</comment>
<proteinExistence type="inferred from homology"/>